<dbReference type="EMBL" id="AE017282">
    <property type="protein sequence ID" value="AAU90762.1"/>
    <property type="molecule type" value="Genomic_DNA"/>
</dbReference>
<dbReference type="RefSeq" id="WP_010959374.1">
    <property type="nucleotide sequence ID" value="NC_002977.6"/>
</dbReference>
<dbReference type="SMR" id="Q60CS5"/>
<dbReference type="STRING" id="243233.MCA0001"/>
<dbReference type="GeneID" id="88222354"/>
<dbReference type="KEGG" id="mca:MCA0001"/>
<dbReference type="eggNOG" id="COG0445">
    <property type="taxonomic scope" value="Bacteria"/>
</dbReference>
<dbReference type="HOGENOM" id="CLU_007831_2_2_6"/>
<dbReference type="Proteomes" id="UP000006821">
    <property type="component" value="Chromosome"/>
</dbReference>
<dbReference type="GO" id="GO:0005829">
    <property type="term" value="C:cytosol"/>
    <property type="evidence" value="ECO:0007669"/>
    <property type="project" value="TreeGrafter"/>
</dbReference>
<dbReference type="GO" id="GO:0050660">
    <property type="term" value="F:flavin adenine dinucleotide binding"/>
    <property type="evidence" value="ECO:0007669"/>
    <property type="project" value="UniProtKB-UniRule"/>
</dbReference>
<dbReference type="GO" id="GO:0030488">
    <property type="term" value="P:tRNA methylation"/>
    <property type="evidence" value="ECO:0007669"/>
    <property type="project" value="TreeGrafter"/>
</dbReference>
<dbReference type="GO" id="GO:0002098">
    <property type="term" value="P:tRNA wobble uridine modification"/>
    <property type="evidence" value="ECO:0007669"/>
    <property type="project" value="InterPro"/>
</dbReference>
<dbReference type="FunFam" id="1.10.150.570:FF:000001">
    <property type="entry name" value="tRNA uridine 5-carboxymethylaminomethyl modification enzyme MnmG"/>
    <property type="match status" value="1"/>
</dbReference>
<dbReference type="FunFam" id="3.50.50.60:FF:000002">
    <property type="entry name" value="tRNA uridine 5-carboxymethylaminomethyl modification enzyme MnmG"/>
    <property type="match status" value="1"/>
</dbReference>
<dbReference type="FunFam" id="3.50.50.60:FF:000010">
    <property type="entry name" value="tRNA uridine 5-carboxymethylaminomethyl modification enzyme MnmG"/>
    <property type="match status" value="1"/>
</dbReference>
<dbReference type="Gene3D" id="3.50.50.60">
    <property type="entry name" value="FAD/NAD(P)-binding domain"/>
    <property type="match status" value="2"/>
</dbReference>
<dbReference type="Gene3D" id="1.10.150.570">
    <property type="entry name" value="GidA associated domain, C-terminal subdomain"/>
    <property type="match status" value="1"/>
</dbReference>
<dbReference type="Gene3D" id="1.10.10.1800">
    <property type="entry name" value="tRNA uridine 5-carboxymethylaminomethyl modification enzyme MnmG/GidA"/>
    <property type="match status" value="1"/>
</dbReference>
<dbReference type="HAMAP" id="MF_00129">
    <property type="entry name" value="MnmG_GidA"/>
    <property type="match status" value="1"/>
</dbReference>
<dbReference type="InterPro" id="IPR036188">
    <property type="entry name" value="FAD/NAD-bd_sf"/>
</dbReference>
<dbReference type="InterPro" id="IPR049312">
    <property type="entry name" value="GIDA_C_N"/>
</dbReference>
<dbReference type="InterPro" id="IPR004416">
    <property type="entry name" value="MnmG"/>
</dbReference>
<dbReference type="InterPro" id="IPR002218">
    <property type="entry name" value="MnmG-rel"/>
</dbReference>
<dbReference type="InterPro" id="IPR020595">
    <property type="entry name" value="MnmG-rel_CS"/>
</dbReference>
<dbReference type="InterPro" id="IPR026904">
    <property type="entry name" value="MnmG_C"/>
</dbReference>
<dbReference type="InterPro" id="IPR047001">
    <property type="entry name" value="MnmG_C_subdom"/>
</dbReference>
<dbReference type="InterPro" id="IPR044920">
    <property type="entry name" value="MnmG_C_subdom_sf"/>
</dbReference>
<dbReference type="InterPro" id="IPR040131">
    <property type="entry name" value="MnmG_N"/>
</dbReference>
<dbReference type="NCBIfam" id="TIGR00136">
    <property type="entry name" value="mnmG_gidA"/>
    <property type="match status" value="1"/>
</dbReference>
<dbReference type="PANTHER" id="PTHR11806">
    <property type="entry name" value="GLUCOSE INHIBITED DIVISION PROTEIN A"/>
    <property type="match status" value="1"/>
</dbReference>
<dbReference type="PANTHER" id="PTHR11806:SF0">
    <property type="entry name" value="PROTEIN MTO1 HOMOLOG, MITOCHONDRIAL"/>
    <property type="match status" value="1"/>
</dbReference>
<dbReference type="Pfam" id="PF01134">
    <property type="entry name" value="GIDA"/>
    <property type="match status" value="1"/>
</dbReference>
<dbReference type="Pfam" id="PF21680">
    <property type="entry name" value="GIDA_C_1st"/>
    <property type="match status" value="1"/>
</dbReference>
<dbReference type="Pfam" id="PF13932">
    <property type="entry name" value="SAM_GIDA_C"/>
    <property type="match status" value="1"/>
</dbReference>
<dbReference type="SMART" id="SM01228">
    <property type="entry name" value="GIDA_assoc_3"/>
    <property type="match status" value="1"/>
</dbReference>
<dbReference type="SUPFAM" id="SSF51905">
    <property type="entry name" value="FAD/NAD(P)-binding domain"/>
    <property type="match status" value="1"/>
</dbReference>
<dbReference type="PROSITE" id="PS01280">
    <property type="entry name" value="GIDA_1"/>
    <property type="match status" value="1"/>
</dbReference>
<dbReference type="PROSITE" id="PS01281">
    <property type="entry name" value="GIDA_2"/>
    <property type="match status" value="1"/>
</dbReference>
<accession>Q60CS5</accession>
<keyword id="KW-0963">Cytoplasm</keyword>
<keyword id="KW-0274">FAD</keyword>
<keyword id="KW-0285">Flavoprotein</keyword>
<keyword id="KW-0520">NAD</keyword>
<keyword id="KW-1185">Reference proteome</keyword>
<keyword id="KW-0819">tRNA processing</keyword>
<protein>
    <recommendedName>
        <fullName evidence="1">tRNA uridine 5-carboxymethylaminomethyl modification enzyme MnmG</fullName>
    </recommendedName>
    <alternativeName>
        <fullName evidence="1">Glucose-inhibited division protein A</fullName>
    </alternativeName>
</protein>
<organism>
    <name type="scientific">Methylococcus capsulatus (strain ATCC 33009 / NCIMB 11132 / Bath)</name>
    <dbReference type="NCBI Taxonomy" id="243233"/>
    <lineage>
        <taxon>Bacteria</taxon>
        <taxon>Pseudomonadati</taxon>
        <taxon>Pseudomonadota</taxon>
        <taxon>Gammaproteobacteria</taxon>
        <taxon>Methylococcales</taxon>
        <taxon>Methylococcaceae</taxon>
        <taxon>Methylococcus</taxon>
    </lineage>
</organism>
<comment type="function">
    <text evidence="1">NAD-binding protein involved in the addition of a carboxymethylaminomethyl (cmnm) group at the wobble position (U34) of certain tRNAs, forming tRNA-cmnm(5)s(2)U34.</text>
</comment>
<comment type="cofactor">
    <cofactor evidence="1">
        <name>FAD</name>
        <dbReference type="ChEBI" id="CHEBI:57692"/>
    </cofactor>
</comment>
<comment type="subunit">
    <text evidence="1">Homodimer. Heterotetramer of two MnmE and two MnmG subunits.</text>
</comment>
<comment type="subcellular location">
    <subcellularLocation>
        <location evidence="1">Cytoplasm</location>
    </subcellularLocation>
</comment>
<comment type="similarity">
    <text evidence="1">Belongs to the MnmG family.</text>
</comment>
<sequence>MFFDDEFDVIVVGGGHAGTEAALAAARTGARTLLLTQNVETLGQMSCNPAIGGIGKGHLVKEIDAMGGLMARAADRAGIQFRILNASKGPAVRATRAQADRSLYRKAVREGLSAQENLSLFQQTVVDLIVEGRRAAGVVTQMGLKFRSRCVVLTVGTFLAGRIHIGLENYDGGRAGDPPATDLARRLRDLGFKVARLKTGTPPRIDRRSVDFSRMAEQPGDDPTPVFSFLGTREEHPPQVSCYITRTNERTHELIRAGLDRSPMFTGVIEGIGPRYCPSIEDKVVRFAERDSHQIFVEPEGLDSLEIYPNGISTSLPFDVQLAVVRSIQGFEDARITRPGYAIEYDFFDPRDLRHSLETRHMENLFFAGQINGTTGYEEAAAQGLLAGLNAARKARDLEPWWPGRDEAYLGVLVDDLITRGTSEPYRMFTSRAEYRLVLREDNADLRLTETGRALGLVDDARWSAFEAKREAIETLGARLAARRIRPDSSQAESWNALTEIPLQREASLLELLRRPDVGLEHIAGHAPDLFEGMDRAVREQVEIAAKYTGYIERQQAEIERVRRYEAWQLPDSMDYGKVIGLSSEVREKLGRVRPATVGQAARIPGITPAAISLLLVHLRRTGAA</sequence>
<feature type="chain" id="PRO_0000117130" description="tRNA uridine 5-carboxymethylaminomethyl modification enzyme MnmG">
    <location>
        <begin position="1"/>
        <end position="625"/>
    </location>
</feature>
<feature type="binding site" evidence="1">
    <location>
        <begin position="13"/>
        <end position="18"/>
    </location>
    <ligand>
        <name>FAD</name>
        <dbReference type="ChEBI" id="CHEBI:57692"/>
    </ligand>
</feature>
<feature type="binding site" evidence="1">
    <location>
        <begin position="273"/>
        <end position="287"/>
    </location>
    <ligand>
        <name>NAD(+)</name>
        <dbReference type="ChEBI" id="CHEBI:57540"/>
    </ligand>
</feature>
<gene>
    <name evidence="1" type="primary">mnmG</name>
    <name evidence="1" type="synonym">gidA</name>
    <name type="ordered locus">MCA0001</name>
</gene>
<proteinExistence type="inferred from homology"/>
<reference key="1">
    <citation type="journal article" date="2004" name="PLoS Biol.">
        <title>Genomic insights into methanotrophy: the complete genome sequence of Methylococcus capsulatus (Bath).</title>
        <authorList>
            <person name="Ward N.L."/>
            <person name="Larsen O."/>
            <person name="Sakwa J."/>
            <person name="Bruseth L."/>
            <person name="Khouri H.M."/>
            <person name="Durkin A.S."/>
            <person name="Dimitrov G."/>
            <person name="Jiang L."/>
            <person name="Scanlan D."/>
            <person name="Kang K.H."/>
            <person name="Lewis M.R."/>
            <person name="Nelson K.E."/>
            <person name="Methe B.A."/>
            <person name="Wu M."/>
            <person name="Heidelberg J.F."/>
            <person name="Paulsen I.T."/>
            <person name="Fouts D.E."/>
            <person name="Ravel J."/>
            <person name="Tettelin H."/>
            <person name="Ren Q."/>
            <person name="Read T.D."/>
            <person name="DeBoy R.T."/>
            <person name="Seshadri R."/>
            <person name="Salzberg S.L."/>
            <person name="Jensen H.B."/>
            <person name="Birkeland N.K."/>
            <person name="Nelson W.C."/>
            <person name="Dodson R.J."/>
            <person name="Grindhaug S.H."/>
            <person name="Holt I.E."/>
            <person name="Eidhammer I."/>
            <person name="Jonasen I."/>
            <person name="Vanaken S."/>
            <person name="Utterback T.R."/>
            <person name="Feldblyum T.V."/>
            <person name="Fraser C.M."/>
            <person name="Lillehaug J.R."/>
            <person name="Eisen J.A."/>
        </authorList>
    </citation>
    <scope>NUCLEOTIDE SEQUENCE [LARGE SCALE GENOMIC DNA]</scope>
    <source>
        <strain>ATCC 33009 / NCIMB 11132 / Bath</strain>
    </source>
</reference>
<name>MNMG_METCA</name>
<evidence type="ECO:0000255" key="1">
    <source>
        <dbReference type="HAMAP-Rule" id="MF_00129"/>
    </source>
</evidence>